<protein>
    <recommendedName>
        <fullName evidence="1">Large ribosomal subunit protein bL31</fullName>
    </recommendedName>
    <alternativeName>
        <fullName evidence="2">50S ribosomal protein L31</fullName>
    </alternativeName>
</protein>
<proteinExistence type="inferred from homology"/>
<sequence>MKKKIHPRYSKITATCSCGNIIEIFSTINHNLNLDICAKCHPFYTGKQRVIDTGGRVERFKKRFKFTKQELN</sequence>
<gene>
    <name evidence="1" type="primary">rpmE</name>
    <name type="ordered locus">BU577</name>
</gene>
<dbReference type="EMBL" id="BA000003">
    <property type="protein sequence ID" value="BAB13266.1"/>
    <property type="molecule type" value="Genomic_DNA"/>
</dbReference>
<dbReference type="RefSeq" id="NP_240380.1">
    <property type="nucleotide sequence ID" value="NC_002528.1"/>
</dbReference>
<dbReference type="RefSeq" id="WP_009874525.1">
    <property type="nucleotide sequence ID" value="NC_002528.1"/>
</dbReference>
<dbReference type="SMR" id="P57639"/>
<dbReference type="STRING" id="563178.BUAP5A_570"/>
<dbReference type="EnsemblBacteria" id="BAB13266">
    <property type="protein sequence ID" value="BAB13266"/>
    <property type="gene ID" value="BAB13266"/>
</dbReference>
<dbReference type="KEGG" id="buc:BU577"/>
<dbReference type="PATRIC" id="fig|107806.10.peg.581"/>
<dbReference type="eggNOG" id="COG0254">
    <property type="taxonomic scope" value="Bacteria"/>
</dbReference>
<dbReference type="HOGENOM" id="CLU_114306_4_3_6"/>
<dbReference type="Proteomes" id="UP000001806">
    <property type="component" value="Chromosome"/>
</dbReference>
<dbReference type="GO" id="GO:1990904">
    <property type="term" value="C:ribonucleoprotein complex"/>
    <property type="evidence" value="ECO:0007669"/>
    <property type="project" value="UniProtKB-KW"/>
</dbReference>
<dbReference type="GO" id="GO:0005840">
    <property type="term" value="C:ribosome"/>
    <property type="evidence" value="ECO:0007669"/>
    <property type="project" value="UniProtKB-KW"/>
</dbReference>
<dbReference type="GO" id="GO:0046872">
    <property type="term" value="F:metal ion binding"/>
    <property type="evidence" value="ECO:0007669"/>
    <property type="project" value="UniProtKB-KW"/>
</dbReference>
<dbReference type="GO" id="GO:0019843">
    <property type="term" value="F:rRNA binding"/>
    <property type="evidence" value="ECO:0007669"/>
    <property type="project" value="UniProtKB-KW"/>
</dbReference>
<dbReference type="GO" id="GO:0003735">
    <property type="term" value="F:structural constituent of ribosome"/>
    <property type="evidence" value="ECO:0007669"/>
    <property type="project" value="InterPro"/>
</dbReference>
<dbReference type="GO" id="GO:0006412">
    <property type="term" value="P:translation"/>
    <property type="evidence" value="ECO:0007669"/>
    <property type="project" value="UniProtKB-UniRule"/>
</dbReference>
<dbReference type="Gene3D" id="4.10.830.30">
    <property type="entry name" value="Ribosomal protein L31"/>
    <property type="match status" value="1"/>
</dbReference>
<dbReference type="HAMAP" id="MF_00501">
    <property type="entry name" value="Ribosomal_bL31_1"/>
    <property type="match status" value="1"/>
</dbReference>
<dbReference type="InterPro" id="IPR034704">
    <property type="entry name" value="Ribosomal_bL28/bL31-like_sf"/>
</dbReference>
<dbReference type="InterPro" id="IPR002150">
    <property type="entry name" value="Ribosomal_bL31"/>
</dbReference>
<dbReference type="InterPro" id="IPR027491">
    <property type="entry name" value="Ribosomal_bL31_A"/>
</dbReference>
<dbReference type="InterPro" id="IPR042105">
    <property type="entry name" value="Ribosomal_bL31_sf"/>
</dbReference>
<dbReference type="NCBIfam" id="TIGR00105">
    <property type="entry name" value="L31"/>
    <property type="match status" value="1"/>
</dbReference>
<dbReference type="NCBIfam" id="NF000612">
    <property type="entry name" value="PRK00019.1"/>
    <property type="match status" value="1"/>
</dbReference>
<dbReference type="PANTHER" id="PTHR33280">
    <property type="entry name" value="50S RIBOSOMAL PROTEIN L31, CHLOROPLASTIC"/>
    <property type="match status" value="1"/>
</dbReference>
<dbReference type="PANTHER" id="PTHR33280:SF6">
    <property type="entry name" value="LARGE RIBOSOMAL SUBUNIT PROTEIN BL31A"/>
    <property type="match status" value="1"/>
</dbReference>
<dbReference type="Pfam" id="PF01197">
    <property type="entry name" value="Ribosomal_L31"/>
    <property type="match status" value="1"/>
</dbReference>
<dbReference type="PRINTS" id="PR01249">
    <property type="entry name" value="RIBOSOMALL31"/>
</dbReference>
<dbReference type="SUPFAM" id="SSF143800">
    <property type="entry name" value="L28p-like"/>
    <property type="match status" value="1"/>
</dbReference>
<dbReference type="PROSITE" id="PS01143">
    <property type="entry name" value="RIBOSOMAL_L31"/>
    <property type="match status" value="1"/>
</dbReference>
<reference key="1">
    <citation type="journal article" date="2000" name="Nature">
        <title>Genome sequence of the endocellular bacterial symbiont of aphids Buchnera sp. APS.</title>
        <authorList>
            <person name="Shigenobu S."/>
            <person name="Watanabe H."/>
            <person name="Hattori M."/>
            <person name="Sakaki Y."/>
            <person name="Ishikawa H."/>
        </authorList>
    </citation>
    <scope>NUCLEOTIDE SEQUENCE [LARGE SCALE GENOMIC DNA]</scope>
    <source>
        <strain>APS</strain>
    </source>
</reference>
<comment type="function">
    <text evidence="1">Binds the 23S rRNA.</text>
</comment>
<comment type="cofactor">
    <cofactor evidence="1">
        <name>Zn(2+)</name>
        <dbReference type="ChEBI" id="CHEBI:29105"/>
    </cofactor>
    <text evidence="1">Binds 1 zinc ion per subunit.</text>
</comment>
<comment type="subunit">
    <text evidence="1">Part of the 50S ribosomal subunit.</text>
</comment>
<comment type="similarity">
    <text evidence="1">Belongs to the bacterial ribosomal protein bL31 family. Type A subfamily.</text>
</comment>
<organism>
    <name type="scientific">Buchnera aphidicola subsp. Acyrthosiphon pisum (strain APS)</name>
    <name type="common">Acyrthosiphon pisum symbiotic bacterium</name>
    <dbReference type="NCBI Taxonomy" id="107806"/>
    <lineage>
        <taxon>Bacteria</taxon>
        <taxon>Pseudomonadati</taxon>
        <taxon>Pseudomonadota</taxon>
        <taxon>Gammaproteobacteria</taxon>
        <taxon>Enterobacterales</taxon>
        <taxon>Erwiniaceae</taxon>
        <taxon>Buchnera</taxon>
    </lineage>
</organism>
<evidence type="ECO:0000255" key="1">
    <source>
        <dbReference type="HAMAP-Rule" id="MF_00501"/>
    </source>
</evidence>
<evidence type="ECO:0000305" key="2"/>
<accession>P57639</accession>
<name>RL31_BUCAI</name>
<feature type="chain" id="PRO_0000173087" description="Large ribosomal subunit protein bL31">
    <location>
        <begin position="1"/>
        <end position="72"/>
    </location>
</feature>
<feature type="binding site" evidence="1">
    <location>
        <position position="16"/>
    </location>
    <ligand>
        <name>Zn(2+)</name>
        <dbReference type="ChEBI" id="CHEBI:29105"/>
    </ligand>
</feature>
<feature type="binding site" evidence="1">
    <location>
        <position position="18"/>
    </location>
    <ligand>
        <name>Zn(2+)</name>
        <dbReference type="ChEBI" id="CHEBI:29105"/>
    </ligand>
</feature>
<feature type="binding site" evidence="1">
    <location>
        <position position="37"/>
    </location>
    <ligand>
        <name>Zn(2+)</name>
        <dbReference type="ChEBI" id="CHEBI:29105"/>
    </ligand>
</feature>
<feature type="binding site" evidence="1">
    <location>
        <position position="40"/>
    </location>
    <ligand>
        <name>Zn(2+)</name>
        <dbReference type="ChEBI" id="CHEBI:29105"/>
    </ligand>
</feature>
<keyword id="KW-0479">Metal-binding</keyword>
<keyword id="KW-1185">Reference proteome</keyword>
<keyword id="KW-0687">Ribonucleoprotein</keyword>
<keyword id="KW-0689">Ribosomal protein</keyword>
<keyword id="KW-0694">RNA-binding</keyword>
<keyword id="KW-0699">rRNA-binding</keyword>
<keyword id="KW-0862">Zinc</keyword>